<dbReference type="EC" id="2.7.1.24" evidence="1"/>
<dbReference type="EMBL" id="CP000076">
    <property type="protein sequence ID" value="AAY94504.1"/>
    <property type="molecule type" value="Genomic_DNA"/>
</dbReference>
<dbReference type="RefSeq" id="WP_011063523.1">
    <property type="nucleotide sequence ID" value="NC_004129.6"/>
</dbReference>
<dbReference type="SMR" id="Q4K5X1"/>
<dbReference type="STRING" id="220664.PFL_5290"/>
<dbReference type="ABCD" id="Q4K5X1">
    <property type="antibodies" value="5 sequenced antibodies"/>
</dbReference>
<dbReference type="GeneID" id="57478258"/>
<dbReference type="KEGG" id="pfl:PFL_5290"/>
<dbReference type="PATRIC" id="fig|220664.5.peg.5402"/>
<dbReference type="eggNOG" id="COG0237">
    <property type="taxonomic scope" value="Bacteria"/>
</dbReference>
<dbReference type="HOGENOM" id="CLU_057180_1_2_6"/>
<dbReference type="UniPathway" id="UPA00241">
    <property type="reaction ID" value="UER00356"/>
</dbReference>
<dbReference type="Proteomes" id="UP000008540">
    <property type="component" value="Chromosome"/>
</dbReference>
<dbReference type="GO" id="GO:0005737">
    <property type="term" value="C:cytoplasm"/>
    <property type="evidence" value="ECO:0007669"/>
    <property type="project" value="UniProtKB-SubCell"/>
</dbReference>
<dbReference type="GO" id="GO:0005524">
    <property type="term" value="F:ATP binding"/>
    <property type="evidence" value="ECO:0007669"/>
    <property type="project" value="UniProtKB-UniRule"/>
</dbReference>
<dbReference type="GO" id="GO:0004140">
    <property type="term" value="F:dephospho-CoA kinase activity"/>
    <property type="evidence" value="ECO:0007669"/>
    <property type="project" value="UniProtKB-UniRule"/>
</dbReference>
<dbReference type="GO" id="GO:0015937">
    <property type="term" value="P:coenzyme A biosynthetic process"/>
    <property type="evidence" value="ECO:0007669"/>
    <property type="project" value="UniProtKB-UniRule"/>
</dbReference>
<dbReference type="CDD" id="cd02022">
    <property type="entry name" value="DPCK"/>
    <property type="match status" value="1"/>
</dbReference>
<dbReference type="Gene3D" id="3.40.50.300">
    <property type="entry name" value="P-loop containing nucleotide triphosphate hydrolases"/>
    <property type="match status" value="1"/>
</dbReference>
<dbReference type="HAMAP" id="MF_00376">
    <property type="entry name" value="Dephospho_CoA_kinase"/>
    <property type="match status" value="1"/>
</dbReference>
<dbReference type="InterPro" id="IPR001977">
    <property type="entry name" value="Depp_CoAkinase"/>
</dbReference>
<dbReference type="InterPro" id="IPR027417">
    <property type="entry name" value="P-loop_NTPase"/>
</dbReference>
<dbReference type="NCBIfam" id="TIGR00152">
    <property type="entry name" value="dephospho-CoA kinase"/>
    <property type="match status" value="1"/>
</dbReference>
<dbReference type="PANTHER" id="PTHR10695:SF46">
    <property type="entry name" value="BIFUNCTIONAL COENZYME A SYNTHASE-RELATED"/>
    <property type="match status" value="1"/>
</dbReference>
<dbReference type="PANTHER" id="PTHR10695">
    <property type="entry name" value="DEPHOSPHO-COA KINASE-RELATED"/>
    <property type="match status" value="1"/>
</dbReference>
<dbReference type="Pfam" id="PF01121">
    <property type="entry name" value="CoaE"/>
    <property type="match status" value="1"/>
</dbReference>
<dbReference type="SUPFAM" id="SSF52540">
    <property type="entry name" value="P-loop containing nucleoside triphosphate hydrolases"/>
    <property type="match status" value="1"/>
</dbReference>
<dbReference type="PROSITE" id="PS51219">
    <property type="entry name" value="DPCK"/>
    <property type="match status" value="1"/>
</dbReference>
<organism>
    <name type="scientific">Pseudomonas fluorescens (strain ATCC BAA-477 / NRRL B-23932 / Pf-5)</name>
    <dbReference type="NCBI Taxonomy" id="220664"/>
    <lineage>
        <taxon>Bacteria</taxon>
        <taxon>Pseudomonadati</taxon>
        <taxon>Pseudomonadota</taxon>
        <taxon>Gammaproteobacteria</taxon>
        <taxon>Pseudomonadales</taxon>
        <taxon>Pseudomonadaceae</taxon>
        <taxon>Pseudomonas</taxon>
    </lineage>
</organism>
<name>COAE_PSEF5</name>
<feature type="chain" id="PRO_0000243319" description="Dephospho-CoA kinase">
    <location>
        <begin position="1"/>
        <end position="207"/>
    </location>
</feature>
<feature type="domain" description="DPCK" evidence="1">
    <location>
        <begin position="10"/>
        <end position="207"/>
    </location>
</feature>
<feature type="binding site" evidence="1">
    <location>
        <begin position="18"/>
        <end position="23"/>
    </location>
    <ligand>
        <name>ATP</name>
        <dbReference type="ChEBI" id="CHEBI:30616"/>
    </ligand>
</feature>
<protein>
    <recommendedName>
        <fullName evidence="1">Dephospho-CoA kinase</fullName>
        <ecNumber evidence="1">2.7.1.24</ecNumber>
    </recommendedName>
    <alternativeName>
        <fullName evidence="1">Dephosphocoenzyme A kinase</fullName>
    </alternativeName>
</protein>
<reference key="1">
    <citation type="journal article" date="2005" name="Nat. Biotechnol.">
        <title>Complete genome sequence of the plant commensal Pseudomonas fluorescens Pf-5.</title>
        <authorList>
            <person name="Paulsen I.T."/>
            <person name="Press C.M."/>
            <person name="Ravel J."/>
            <person name="Kobayashi D.Y."/>
            <person name="Myers G.S.A."/>
            <person name="Mavrodi D.V."/>
            <person name="DeBoy R.T."/>
            <person name="Seshadri R."/>
            <person name="Ren Q."/>
            <person name="Madupu R."/>
            <person name="Dodson R.J."/>
            <person name="Durkin A.S."/>
            <person name="Brinkac L.M."/>
            <person name="Daugherty S.C."/>
            <person name="Sullivan S.A."/>
            <person name="Rosovitz M.J."/>
            <person name="Gwinn M.L."/>
            <person name="Zhou L."/>
            <person name="Schneider D.J."/>
            <person name="Cartinhour S.W."/>
            <person name="Nelson W.C."/>
            <person name="Weidman J."/>
            <person name="Watkins K."/>
            <person name="Tran K."/>
            <person name="Khouri H."/>
            <person name="Pierson E.A."/>
            <person name="Pierson L.S. III"/>
            <person name="Thomashow L.S."/>
            <person name="Loper J.E."/>
        </authorList>
    </citation>
    <scope>NUCLEOTIDE SEQUENCE [LARGE SCALE GENOMIC DNA]</scope>
    <source>
        <strain>ATCC BAA-477 / NRRL B-23932 / Pf-5</strain>
    </source>
</reference>
<sequence>MTRSVNTPWTLGLTGGIGSGKSAAAQHFIDLGVHVIDADHAARWVVEPGRPALEQIARHFGQGVLQADGQLDRAALRKLIFEVPEQRRWLEALLHPLIAEEIVSHLARAESPYAILVSPLLIESGQSRMTQRILVIDVPQQLQIERTLQRDQISEQQVQAILQAQASREERLRHADDVLVNDRDHAWLRSEVERLHHFYLTLRGGQS</sequence>
<evidence type="ECO:0000255" key="1">
    <source>
        <dbReference type="HAMAP-Rule" id="MF_00376"/>
    </source>
</evidence>
<keyword id="KW-0067">ATP-binding</keyword>
<keyword id="KW-0173">Coenzyme A biosynthesis</keyword>
<keyword id="KW-0963">Cytoplasm</keyword>
<keyword id="KW-0418">Kinase</keyword>
<keyword id="KW-0547">Nucleotide-binding</keyword>
<keyword id="KW-0808">Transferase</keyword>
<comment type="function">
    <text evidence="1">Catalyzes the phosphorylation of the 3'-hydroxyl group of dephosphocoenzyme A to form coenzyme A.</text>
</comment>
<comment type="catalytic activity">
    <reaction evidence="1">
        <text>3'-dephospho-CoA + ATP = ADP + CoA + H(+)</text>
        <dbReference type="Rhea" id="RHEA:18245"/>
        <dbReference type="ChEBI" id="CHEBI:15378"/>
        <dbReference type="ChEBI" id="CHEBI:30616"/>
        <dbReference type="ChEBI" id="CHEBI:57287"/>
        <dbReference type="ChEBI" id="CHEBI:57328"/>
        <dbReference type="ChEBI" id="CHEBI:456216"/>
        <dbReference type="EC" id="2.7.1.24"/>
    </reaction>
</comment>
<comment type="pathway">
    <text evidence="1">Cofactor biosynthesis; coenzyme A biosynthesis; CoA from (R)-pantothenate: step 5/5.</text>
</comment>
<comment type="subcellular location">
    <subcellularLocation>
        <location evidence="1">Cytoplasm</location>
    </subcellularLocation>
</comment>
<comment type="similarity">
    <text evidence="1">Belongs to the CoaE family.</text>
</comment>
<accession>Q4K5X1</accession>
<proteinExistence type="inferred from homology"/>
<gene>
    <name evidence="1" type="primary">coaE</name>
    <name type="ordered locus">PFL_5290</name>
</gene>